<dbReference type="EC" id="7.3.2.5" evidence="1"/>
<dbReference type="EMBL" id="AM040265">
    <property type="protein sequence ID" value="CAJ12255.1"/>
    <property type="molecule type" value="Genomic_DNA"/>
</dbReference>
<dbReference type="RefSeq" id="WP_002966488.1">
    <property type="nucleotide sequence ID" value="NZ_KN046823.1"/>
</dbReference>
<dbReference type="SMR" id="Q2YIN5"/>
<dbReference type="STRING" id="359391.BAB2_0089"/>
<dbReference type="GeneID" id="93015934"/>
<dbReference type="KEGG" id="bmf:BAB2_0089"/>
<dbReference type="PATRIC" id="fig|359391.11.peg.2036"/>
<dbReference type="HOGENOM" id="CLU_000604_1_1_5"/>
<dbReference type="PhylomeDB" id="Q2YIN5"/>
<dbReference type="Proteomes" id="UP000002719">
    <property type="component" value="Chromosome II"/>
</dbReference>
<dbReference type="GO" id="GO:0005886">
    <property type="term" value="C:plasma membrane"/>
    <property type="evidence" value="ECO:0007669"/>
    <property type="project" value="UniProtKB-SubCell"/>
</dbReference>
<dbReference type="GO" id="GO:0015412">
    <property type="term" value="F:ABC-type molybdate transporter activity"/>
    <property type="evidence" value="ECO:0007669"/>
    <property type="project" value="UniProtKB-EC"/>
</dbReference>
<dbReference type="GO" id="GO:0005524">
    <property type="term" value="F:ATP binding"/>
    <property type="evidence" value="ECO:0007669"/>
    <property type="project" value="UniProtKB-KW"/>
</dbReference>
<dbReference type="GO" id="GO:0016887">
    <property type="term" value="F:ATP hydrolysis activity"/>
    <property type="evidence" value="ECO:0007669"/>
    <property type="project" value="InterPro"/>
</dbReference>
<dbReference type="Gene3D" id="2.40.50.100">
    <property type="match status" value="1"/>
</dbReference>
<dbReference type="Gene3D" id="3.40.50.300">
    <property type="entry name" value="P-loop containing nucleotide triphosphate hydrolases"/>
    <property type="match status" value="1"/>
</dbReference>
<dbReference type="InterPro" id="IPR003593">
    <property type="entry name" value="AAA+_ATPase"/>
</dbReference>
<dbReference type="InterPro" id="IPR003439">
    <property type="entry name" value="ABC_transporter-like_ATP-bd"/>
</dbReference>
<dbReference type="InterPro" id="IPR017871">
    <property type="entry name" value="ABC_transporter-like_CS"/>
</dbReference>
<dbReference type="InterPro" id="IPR008995">
    <property type="entry name" value="Mo/tungstate-bd_C_term_dom"/>
</dbReference>
<dbReference type="InterPro" id="IPR011868">
    <property type="entry name" value="ModC_ABC_ATP-bd"/>
</dbReference>
<dbReference type="InterPro" id="IPR050334">
    <property type="entry name" value="Molybdenum_import_ModC"/>
</dbReference>
<dbReference type="InterPro" id="IPR004606">
    <property type="entry name" value="Mop_domain"/>
</dbReference>
<dbReference type="InterPro" id="IPR027417">
    <property type="entry name" value="P-loop_NTPase"/>
</dbReference>
<dbReference type="InterPro" id="IPR005116">
    <property type="entry name" value="Transp-assoc_OB_typ1"/>
</dbReference>
<dbReference type="NCBIfam" id="TIGR02142">
    <property type="entry name" value="modC_ABC"/>
    <property type="match status" value="1"/>
</dbReference>
<dbReference type="PANTHER" id="PTHR43514">
    <property type="entry name" value="ABC TRANSPORTER I FAMILY MEMBER 10"/>
    <property type="match status" value="1"/>
</dbReference>
<dbReference type="PANTHER" id="PTHR43514:SF4">
    <property type="entry name" value="ABC TRANSPORTER I FAMILY MEMBER 10"/>
    <property type="match status" value="1"/>
</dbReference>
<dbReference type="Pfam" id="PF00005">
    <property type="entry name" value="ABC_tran"/>
    <property type="match status" value="1"/>
</dbReference>
<dbReference type="Pfam" id="PF03459">
    <property type="entry name" value="TOBE"/>
    <property type="match status" value="1"/>
</dbReference>
<dbReference type="SMART" id="SM00382">
    <property type="entry name" value="AAA"/>
    <property type="match status" value="1"/>
</dbReference>
<dbReference type="SUPFAM" id="SSF50331">
    <property type="entry name" value="MOP-like"/>
    <property type="match status" value="1"/>
</dbReference>
<dbReference type="SUPFAM" id="SSF52540">
    <property type="entry name" value="P-loop containing nucleoside triphosphate hydrolases"/>
    <property type="match status" value="1"/>
</dbReference>
<dbReference type="PROSITE" id="PS00211">
    <property type="entry name" value="ABC_TRANSPORTER_1"/>
    <property type="match status" value="1"/>
</dbReference>
<dbReference type="PROSITE" id="PS50893">
    <property type="entry name" value="ABC_TRANSPORTER_2"/>
    <property type="match status" value="1"/>
</dbReference>
<dbReference type="PROSITE" id="PS51241">
    <property type="entry name" value="MODC"/>
    <property type="match status" value="1"/>
</dbReference>
<dbReference type="PROSITE" id="PS51866">
    <property type="entry name" value="MOP"/>
    <property type="match status" value="1"/>
</dbReference>
<feature type="chain" id="PRO_0000260200" description="Molybdenum import ATP-binding protein ModC">
    <location>
        <begin position="1"/>
        <end position="359"/>
    </location>
</feature>
<feature type="domain" description="ABC transporter" evidence="1">
    <location>
        <begin position="1"/>
        <end position="233"/>
    </location>
</feature>
<feature type="domain" description="Mop" evidence="2">
    <location>
        <begin position="289"/>
        <end position="355"/>
    </location>
</feature>
<feature type="binding site" evidence="1">
    <location>
        <begin position="32"/>
        <end position="39"/>
    </location>
    <ligand>
        <name>ATP</name>
        <dbReference type="ChEBI" id="CHEBI:30616"/>
    </ligand>
</feature>
<comment type="function">
    <text evidence="1">Part of the ABC transporter complex ModABC involved in molybdenum import. Responsible for energy coupling to the transport system.</text>
</comment>
<comment type="catalytic activity">
    <reaction evidence="1">
        <text>molybdate(out) + ATP + H2O = molybdate(in) + ADP + phosphate + H(+)</text>
        <dbReference type="Rhea" id="RHEA:22020"/>
        <dbReference type="ChEBI" id="CHEBI:15377"/>
        <dbReference type="ChEBI" id="CHEBI:15378"/>
        <dbReference type="ChEBI" id="CHEBI:30616"/>
        <dbReference type="ChEBI" id="CHEBI:36264"/>
        <dbReference type="ChEBI" id="CHEBI:43474"/>
        <dbReference type="ChEBI" id="CHEBI:456216"/>
        <dbReference type="EC" id="7.3.2.5"/>
    </reaction>
</comment>
<comment type="subunit">
    <text evidence="1">The complex is composed of two ATP-binding proteins (ModC), two transmembrane proteins (ModB) and a solute-binding protein (ModA).</text>
</comment>
<comment type="subcellular location">
    <subcellularLocation>
        <location evidence="1">Cell inner membrane</location>
        <topology evidence="1">Peripheral membrane protein</topology>
    </subcellularLocation>
</comment>
<comment type="similarity">
    <text evidence="1">Belongs to the ABC transporter superfamily. Molybdate importer (TC 3.A.1.8) family.</text>
</comment>
<name>MODC_BRUA2</name>
<proteinExistence type="inferred from homology"/>
<evidence type="ECO:0000255" key="1">
    <source>
        <dbReference type="HAMAP-Rule" id="MF_01705"/>
    </source>
</evidence>
<evidence type="ECO:0000255" key="2">
    <source>
        <dbReference type="PROSITE-ProRule" id="PRU01213"/>
    </source>
</evidence>
<accession>Q2YIN5</accession>
<gene>
    <name evidence="1" type="primary">modC</name>
    <name type="ordered locus">BAB2_0089</name>
</gene>
<protein>
    <recommendedName>
        <fullName evidence="1">Molybdenum import ATP-binding protein ModC</fullName>
        <ecNumber evidence="1">7.3.2.5</ecNumber>
    </recommendedName>
</protein>
<reference key="1">
    <citation type="journal article" date="2005" name="Infect. Immun.">
        <title>Whole-genome analyses of speciation events in pathogenic Brucellae.</title>
        <authorList>
            <person name="Chain P.S."/>
            <person name="Comerci D.J."/>
            <person name="Tolmasky M.E."/>
            <person name="Larimer F.W."/>
            <person name="Malfatti S.A."/>
            <person name="Vergez L.M."/>
            <person name="Aguero F."/>
            <person name="Land M.L."/>
            <person name="Ugalde R.A."/>
            <person name="Garcia E."/>
        </authorList>
    </citation>
    <scope>NUCLEOTIDE SEQUENCE [LARGE SCALE GENOMIC DNA]</scope>
    <source>
        <strain>2308</strain>
    </source>
</reference>
<sequence length="359" mass="38881">MSGLTVSIRGRNGAFAIEAGFAAEGGVTALFGHSGAGKTTLLKMIAGTLRPENGRIAVGDFTLFDAQKGINLPPEKRRIGYVFQDARLFAYMSVKRNLTYARWAGHRPATRSFDEVVALLGIGHLLDRRPSTLSGGERQRVAIGRALLSDPALLLLDEPLSSLDHARRQEILPFIERLRDESHVPIVYVSHEIDEVARLADQIVLLSAGRVTASGAAADIFPLIDAESEGGGVLLEGIVSAYDERYKLAEIDLGGASFQLSDAGLKQTMHVRLRVRARDVSIARKIPEAISIRNLLPVTVTGIERGEGPNAHVFLDFRGRRLGARLTRRSVDDLGLSVGDQVVALVKAVSVDRAAIREK</sequence>
<organism>
    <name type="scientific">Brucella abortus (strain 2308)</name>
    <dbReference type="NCBI Taxonomy" id="359391"/>
    <lineage>
        <taxon>Bacteria</taxon>
        <taxon>Pseudomonadati</taxon>
        <taxon>Pseudomonadota</taxon>
        <taxon>Alphaproteobacteria</taxon>
        <taxon>Hyphomicrobiales</taxon>
        <taxon>Brucellaceae</taxon>
        <taxon>Brucella/Ochrobactrum group</taxon>
        <taxon>Brucella</taxon>
    </lineage>
</organism>
<keyword id="KW-0067">ATP-binding</keyword>
<keyword id="KW-0997">Cell inner membrane</keyword>
<keyword id="KW-1003">Cell membrane</keyword>
<keyword id="KW-0472">Membrane</keyword>
<keyword id="KW-0500">Molybdenum</keyword>
<keyword id="KW-0547">Nucleotide-binding</keyword>
<keyword id="KW-1185">Reference proteome</keyword>
<keyword id="KW-1278">Translocase</keyword>
<keyword id="KW-0813">Transport</keyword>